<feature type="chain" id="PRO_0000302107" description="U22-ctenitoxin-Co1a">
    <location>
        <begin position="1"/>
        <end position="23" status="greater than"/>
    </location>
</feature>
<feature type="non-terminal residue">
    <location>
        <position position="23"/>
    </location>
</feature>
<proteinExistence type="evidence at protein level"/>
<accession>P85237</accession>
<evidence type="ECO:0000269" key="1">
    <source ref="1"/>
</evidence>
<evidence type="ECO:0000305" key="2"/>
<dbReference type="ArachnoServer" id="AS000003">
    <property type="toxin name" value="U22-ctenitoxin-Co1a"/>
</dbReference>
<dbReference type="GO" id="GO:0005576">
    <property type="term" value="C:extracellular region"/>
    <property type="evidence" value="ECO:0007669"/>
    <property type="project" value="UniProtKB-SubCell"/>
</dbReference>
<name>F266_CTEON</name>
<organism>
    <name type="scientific">Ctenus ornatus</name>
    <name type="common">Brazilian spider</name>
    <name type="synonym">Oligoctenus ornatus</name>
    <dbReference type="NCBI Taxonomy" id="406443"/>
    <lineage>
        <taxon>Eukaryota</taxon>
        <taxon>Metazoa</taxon>
        <taxon>Ecdysozoa</taxon>
        <taxon>Arthropoda</taxon>
        <taxon>Chelicerata</taxon>
        <taxon>Arachnida</taxon>
        <taxon>Araneae</taxon>
        <taxon>Araneomorphae</taxon>
        <taxon>Entelegynae</taxon>
        <taxon>Lycosoidea</taxon>
        <taxon>Ctenidae</taxon>
        <taxon>Oligoctenus</taxon>
    </lineage>
</organism>
<comment type="subcellular location">
    <subcellularLocation>
        <location evidence="1">Secreted</location>
    </subcellularLocation>
</comment>
<comment type="tissue specificity">
    <text evidence="1">Expressed by the venom gland.</text>
</comment>
<comment type="mass spectrometry" mass="7156.9" error="0.35" method="Electrospray" evidence="1"/>
<comment type="similarity">
    <text>Belongs to the u-CNTX family.</text>
</comment>
<keyword id="KW-0903">Direct protein sequencing</keyword>
<keyword id="KW-0964">Secreted</keyword>
<reference evidence="2" key="1">
    <citation type="submission" date="2007-07" db="UniProtKB">
        <authorList>
            <person name="Borges M.H."/>
            <person name="Oliveira C.F.B."/>
            <person name="Goncalves J.M."/>
            <person name="Rates B."/>
            <person name="Santos D.M."/>
            <person name="Pimenta A.M.C."/>
            <person name="Cordeiro M.N."/>
            <person name="Richardson M."/>
        </authorList>
    </citation>
    <scope>PROTEIN SEQUENCE</scope>
    <scope>SUBCELLULAR LOCATION</scope>
    <scope>TISSUE SPECIFICITY</scope>
    <scope>MASS SPECTROMETRY</scope>
    <source>
        <tissue>Venom</tissue>
    </source>
</reference>
<protein>
    <recommendedName>
        <fullName>U22-ctenitoxin-Co1a</fullName>
        <shortName>U22-CNTX-Co1a</shortName>
    </recommendedName>
    <alternativeName>
        <fullName>Venom protein Oc F26-6</fullName>
    </alternativeName>
</protein>
<sequence length="23" mass="2450">EWCGTNSDCGEGECCTGGSFNRH</sequence>